<organism>
    <name type="scientific">Clostridium acetobutylicum (strain ATCC 824 / DSM 792 / JCM 1419 / IAM 19013 / LMG 5710 / NBRC 13948 / NRRL B-527 / VKM B-1787 / 2291 / W)</name>
    <dbReference type="NCBI Taxonomy" id="272562"/>
    <lineage>
        <taxon>Bacteria</taxon>
        <taxon>Bacillati</taxon>
        <taxon>Bacillota</taxon>
        <taxon>Clostridia</taxon>
        <taxon>Eubacteriales</taxon>
        <taxon>Clostridiaceae</taxon>
        <taxon>Clostridium</taxon>
    </lineage>
</organism>
<reference key="1">
    <citation type="journal article" date="2001" name="J. Bacteriol.">
        <title>Genome sequence and comparative analysis of the solvent-producing bacterium Clostridium acetobutylicum.</title>
        <authorList>
            <person name="Noelling J."/>
            <person name="Breton G."/>
            <person name="Omelchenko M.V."/>
            <person name="Makarova K.S."/>
            <person name="Zeng Q."/>
            <person name="Gibson R."/>
            <person name="Lee H.M."/>
            <person name="Dubois J."/>
            <person name="Qiu D."/>
            <person name="Hitti J."/>
            <person name="Wolf Y.I."/>
            <person name="Tatusov R.L."/>
            <person name="Sabathe F."/>
            <person name="Doucette-Stamm L.A."/>
            <person name="Soucaille P."/>
            <person name="Daly M.J."/>
            <person name="Bennett G.N."/>
            <person name="Koonin E.V."/>
            <person name="Smith D.R."/>
        </authorList>
    </citation>
    <scope>NUCLEOTIDE SEQUENCE [LARGE SCALE GENOMIC DNA]</scope>
    <source>
        <strain>ATCC 824 / DSM 792 / JCM 1419 / IAM 19013 / LMG 5710 / NBRC 13948 / NRRL B-527 / VKM B-1787 / 2291 / W</strain>
    </source>
</reference>
<proteinExistence type="inferred from homology"/>
<accession>Q97F61</accession>
<dbReference type="EC" id="6.3.4.2" evidence="1"/>
<dbReference type="EMBL" id="AE001437">
    <property type="protein sequence ID" value="AAK80834.1"/>
    <property type="molecule type" value="Genomic_DNA"/>
</dbReference>
<dbReference type="PIR" id="G97255">
    <property type="entry name" value="G97255"/>
</dbReference>
<dbReference type="RefSeq" id="NP_349494.1">
    <property type="nucleotide sequence ID" value="NC_003030.1"/>
</dbReference>
<dbReference type="RefSeq" id="WP_010966175.1">
    <property type="nucleotide sequence ID" value="NC_003030.1"/>
</dbReference>
<dbReference type="SMR" id="Q97F61"/>
<dbReference type="STRING" id="272562.CA_C2892"/>
<dbReference type="DNASU" id="1119075"/>
<dbReference type="KEGG" id="cac:CA_C2892"/>
<dbReference type="PATRIC" id="fig|272562.8.peg.3076"/>
<dbReference type="eggNOG" id="COG0504">
    <property type="taxonomic scope" value="Bacteria"/>
</dbReference>
<dbReference type="HOGENOM" id="CLU_011675_5_0_9"/>
<dbReference type="OrthoDB" id="9801107at2"/>
<dbReference type="UniPathway" id="UPA00159">
    <property type="reaction ID" value="UER00277"/>
</dbReference>
<dbReference type="Proteomes" id="UP000000814">
    <property type="component" value="Chromosome"/>
</dbReference>
<dbReference type="GO" id="GO:0005829">
    <property type="term" value="C:cytosol"/>
    <property type="evidence" value="ECO:0007669"/>
    <property type="project" value="TreeGrafter"/>
</dbReference>
<dbReference type="GO" id="GO:0005524">
    <property type="term" value="F:ATP binding"/>
    <property type="evidence" value="ECO:0007669"/>
    <property type="project" value="UniProtKB-KW"/>
</dbReference>
<dbReference type="GO" id="GO:0003883">
    <property type="term" value="F:CTP synthase activity"/>
    <property type="evidence" value="ECO:0007669"/>
    <property type="project" value="UniProtKB-UniRule"/>
</dbReference>
<dbReference type="GO" id="GO:0004359">
    <property type="term" value="F:glutaminase activity"/>
    <property type="evidence" value="ECO:0007669"/>
    <property type="project" value="RHEA"/>
</dbReference>
<dbReference type="GO" id="GO:0042802">
    <property type="term" value="F:identical protein binding"/>
    <property type="evidence" value="ECO:0007669"/>
    <property type="project" value="TreeGrafter"/>
</dbReference>
<dbReference type="GO" id="GO:0046872">
    <property type="term" value="F:metal ion binding"/>
    <property type="evidence" value="ECO:0007669"/>
    <property type="project" value="UniProtKB-KW"/>
</dbReference>
<dbReference type="GO" id="GO:0044210">
    <property type="term" value="P:'de novo' CTP biosynthetic process"/>
    <property type="evidence" value="ECO:0007669"/>
    <property type="project" value="UniProtKB-UniRule"/>
</dbReference>
<dbReference type="GO" id="GO:0019856">
    <property type="term" value="P:pyrimidine nucleobase biosynthetic process"/>
    <property type="evidence" value="ECO:0007669"/>
    <property type="project" value="TreeGrafter"/>
</dbReference>
<dbReference type="CDD" id="cd03113">
    <property type="entry name" value="CTPS_N"/>
    <property type="match status" value="1"/>
</dbReference>
<dbReference type="CDD" id="cd01746">
    <property type="entry name" value="GATase1_CTP_Synthase"/>
    <property type="match status" value="1"/>
</dbReference>
<dbReference type="FunFam" id="3.40.50.300:FF:000009">
    <property type="entry name" value="CTP synthase"/>
    <property type="match status" value="1"/>
</dbReference>
<dbReference type="FunFam" id="3.40.50.880:FF:000002">
    <property type="entry name" value="CTP synthase"/>
    <property type="match status" value="1"/>
</dbReference>
<dbReference type="Gene3D" id="3.40.50.880">
    <property type="match status" value="1"/>
</dbReference>
<dbReference type="Gene3D" id="3.40.50.300">
    <property type="entry name" value="P-loop containing nucleotide triphosphate hydrolases"/>
    <property type="match status" value="1"/>
</dbReference>
<dbReference type="HAMAP" id="MF_01227">
    <property type="entry name" value="PyrG"/>
    <property type="match status" value="1"/>
</dbReference>
<dbReference type="InterPro" id="IPR029062">
    <property type="entry name" value="Class_I_gatase-like"/>
</dbReference>
<dbReference type="InterPro" id="IPR004468">
    <property type="entry name" value="CTP_synthase"/>
</dbReference>
<dbReference type="InterPro" id="IPR017456">
    <property type="entry name" value="CTP_synthase_N"/>
</dbReference>
<dbReference type="InterPro" id="IPR017926">
    <property type="entry name" value="GATASE"/>
</dbReference>
<dbReference type="InterPro" id="IPR033828">
    <property type="entry name" value="GATase1_CTP_Synthase"/>
</dbReference>
<dbReference type="InterPro" id="IPR027417">
    <property type="entry name" value="P-loop_NTPase"/>
</dbReference>
<dbReference type="NCBIfam" id="NF003792">
    <property type="entry name" value="PRK05380.1"/>
    <property type="match status" value="1"/>
</dbReference>
<dbReference type="NCBIfam" id="TIGR00337">
    <property type="entry name" value="PyrG"/>
    <property type="match status" value="1"/>
</dbReference>
<dbReference type="PANTHER" id="PTHR11550">
    <property type="entry name" value="CTP SYNTHASE"/>
    <property type="match status" value="1"/>
</dbReference>
<dbReference type="PANTHER" id="PTHR11550:SF0">
    <property type="entry name" value="CTP SYNTHASE-RELATED"/>
    <property type="match status" value="1"/>
</dbReference>
<dbReference type="Pfam" id="PF06418">
    <property type="entry name" value="CTP_synth_N"/>
    <property type="match status" value="1"/>
</dbReference>
<dbReference type="Pfam" id="PF00117">
    <property type="entry name" value="GATase"/>
    <property type="match status" value="1"/>
</dbReference>
<dbReference type="SUPFAM" id="SSF52317">
    <property type="entry name" value="Class I glutamine amidotransferase-like"/>
    <property type="match status" value="1"/>
</dbReference>
<dbReference type="SUPFAM" id="SSF52540">
    <property type="entry name" value="P-loop containing nucleoside triphosphate hydrolases"/>
    <property type="match status" value="1"/>
</dbReference>
<dbReference type="PROSITE" id="PS51273">
    <property type="entry name" value="GATASE_TYPE_1"/>
    <property type="match status" value="1"/>
</dbReference>
<name>PYRG_CLOAB</name>
<sequence length="535" mass="60079">MKTKYIFVTGGVVSSLGKGITAASLGRLLKNRGLKVSIQKFDPYINVDPGTMSPYQHGEVFVTDDGAETDLDLGHYERFIDENLSKNSNVTTGKVYWSVINKERRGDYLGGTVQVIPHITNELKERVYRVAKEKDVDVVITEIGGTVGDIESLPFLEAIRQIKYEVGFGNSCFIHVTLLPYLRKAGEIKTKPTQHSVKELRGIGIQPDIIVCRTEKEISKDVRSKIGLFCNIDGDSVISNLDAENLYEVPLMLHDQGLDSLVCKKLELECQEVDNSEWESMVKNIKSLSGEVTIGLVGKYVELHDAYISVVESLNHGGFANNVSVNVKWINSEEVTKDNVDSVLSDVDGILVPGGFGDRGIEGKIEAIRWARENKIPFFGICLGMQCAVIEYARNVLGLEGAHSSEIDPQTKYPVIDLMPDQKDIDDKGGTMRLGLYACKLSKDTNAYDAYEEEVIYERHRHRYEFNNEFRKRLTEEGLILAGTSPDDRLVEIVEIKDHPWFVGVQFHPEFKSRPNRPHALFRDFIKVACTVKEK</sequence>
<keyword id="KW-0067">ATP-binding</keyword>
<keyword id="KW-0315">Glutamine amidotransferase</keyword>
<keyword id="KW-0436">Ligase</keyword>
<keyword id="KW-0460">Magnesium</keyword>
<keyword id="KW-0479">Metal-binding</keyword>
<keyword id="KW-0547">Nucleotide-binding</keyword>
<keyword id="KW-0665">Pyrimidine biosynthesis</keyword>
<keyword id="KW-1185">Reference proteome</keyword>
<gene>
    <name evidence="1" type="primary">pyrG</name>
    <name type="ordered locus">CA_C2892</name>
</gene>
<comment type="function">
    <text evidence="1">Catalyzes the ATP-dependent amination of UTP to CTP with either L-glutamine or ammonia as the source of nitrogen. Regulates intracellular CTP levels through interactions with the four ribonucleotide triphosphates.</text>
</comment>
<comment type="catalytic activity">
    <reaction evidence="1">
        <text>UTP + L-glutamine + ATP + H2O = CTP + L-glutamate + ADP + phosphate + 2 H(+)</text>
        <dbReference type="Rhea" id="RHEA:26426"/>
        <dbReference type="ChEBI" id="CHEBI:15377"/>
        <dbReference type="ChEBI" id="CHEBI:15378"/>
        <dbReference type="ChEBI" id="CHEBI:29985"/>
        <dbReference type="ChEBI" id="CHEBI:30616"/>
        <dbReference type="ChEBI" id="CHEBI:37563"/>
        <dbReference type="ChEBI" id="CHEBI:43474"/>
        <dbReference type="ChEBI" id="CHEBI:46398"/>
        <dbReference type="ChEBI" id="CHEBI:58359"/>
        <dbReference type="ChEBI" id="CHEBI:456216"/>
        <dbReference type="EC" id="6.3.4.2"/>
    </reaction>
</comment>
<comment type="catalytic activity">
    <reaction evidence="1">
        <text>L-glutamine + H2O = L-glutamate + NH4(+)</text>
        <dbReference type="Rhea" id="RHEA:15889"/>
        <dbReference type="ChEBI" id="CHEBI:15377"/>
        <dbReference type="ChEBI" id="CHEBI:28938"/>
        <dbReference type="ChEBI" id="CHEBI:29985"/>
        <dbReference type="ChEBI" id="CHEBI:58359"/>
    </reaction>
</comment>
<comment type="catalytic activity">
    <reaction evidence="1">
        <text>UTP + NH4(+) + ATP = CTP + ADP + phosphate + 2 H(+)</text>
        <dbReference type="Rhea" id="RHEA:16597"/>
        <dbReference type="ChEBI" id="CHEBI:15378"/>
        <dbReference type="ChEBI" id="CHEBI:28938"/>
        <dbReference type="ChEBI" id="CHEBI:30616"/>
        <dbReference type="ChEBI" id="CHEBI:37563"/>
        <dbReference type="ChEBI" id="CHEBI:43474"/>
        <dbReference type="ChEBI" id="CHEBI:46398"/>
        <dbReference type="ChEBI" id="CHEBI:456216"/>
    </reaction>
</comment>
<comment type="activity regulation">
    <text evidence="1">Allosterically activated by GTP, when glutamine is the substrate; GTP has no effect on the reaction when ammonia is the substrate. The allosteric effector GTP functions by stabilizing the protein conformation that binds the tetrahedral intermediate(s) formed during glutamine hydrolysis. Inhibited by the product CTP, via allosteric rather than competitive inhibition.</text>
</comment>
<comment type="pathway">
    <text evidence="1">Pyrimidine metabolism; CTP biosynthesis via de novo pathway; CTP from UDP: step 2/2.</text>
</comment>
<comment type="subunit">
    <text evidence="1">Homotetramer.</text>
</comment>
<comment type="miscellaneous">
    <text evidence="1">CTPSs have evolved a hybrid strategy for distinguishing between UTP and CTP. The overlapping regions of the product feedback inhibitory and substrate sites recognize a common feature in both compounds, the triphosphate moiety. To differentiate isosteric substrate and product pyrimidine rings, an additional pocket far from the expected kinase/ligase catalytic site, specifically recognizes the cytosine and ribose portions of the product inhibitor.</text>
</comment>
<comment type="similarity">
    <text evidence="1">Belongs to the CTP synthase family.</text>
</comment>
<feature type="chain" id="PRO_0000138179" description="CTP synthase">
    <location>
        <begin position="1"/>
        <end position="535"/>
    </location>
</feature>
<feature type="domain" description="Glutamine amidotransferase type-1" evidence="1">
    <location>
        <begin position="293"/>
        <end position="535"/>
    </location>
</feature>
<feature type="region of interest" description="Amidoligase domain" evidence="1">
    <location>
        <begin position="1"/>
        <end position="268"/>
    </location>
</feature>
<feature type="active site" description="Nucleophile; for glutamine hydrolysis" evidence="1">
    <location>
        <position position="382"/>
    </location>
</feature>
<feature type="active site" evidence="1">
    <location>
        <position position="508"/>
    </location>
</feature>
<feature type="active site" evidence="1">
    <location>
        <position position="510"/>
    </location>
</feature>
<feature type="binding site" evidence="1">
    <location>
        <position position="14"/>
    </location>
    <ligand>
        <name>CTP</name>
        <dbReference type="ChEBI" id="CHEBI:37563"/>
        <note>allosteric inhibitor</note>
    </ligand>
</feature>
<feature type="binding site" evidence="1">
    <location>
        <position position="14"/>
    </location>
    <ligand>
        <name>UTP</name>
        <dbReference type="ChEBI" id="CHEBI:46398"/>
    </ligand>
</feature>
<feature type="binding site" evidence="1">
    <location>
        <begin position="15"/>
        <end position="20"/>
    </location>
    <ligand>
        <name>ATP</name>
        <dbReference type="ChEBI" id="CHEBI:30616"/>
    </ligand>
</feature>
<feature type="binding site" evidence="1">
    <location>
        <position position="55"/>
    </location>
    <ligand>
        <name>L-glutamine</name>
        <dbReference type="ChEBI" id="CHEBI:58359"/>
    </ligand>
</feature>
<feature type="binding site" evidence="1">
    <location>
        <position position="72"/>
    </location>
    <ligand>
        <name>ATP</name>
        <dbReference type="ChEBI" id="CHEBI:30616"/>
    </ligand>
</feature>
<feature type="binding site" evidence="1">
    <location>
        <position position="72"/>
    </location>
    <ligand>
        <name>Mg(2+)</name>
        <dbReference type="ChEBI" id="CHEBI:18420"/>
    </ligand>
</feature>
<feature type="binding site" evidence="1">
    <location>
        <position position="142"/>
    </location>
    <ligand>
        <name>Mg(2+)</name>
        <dbReference type="ChEBI" id="CHEBI:18420"/>
    </ligand>
</feature>
<feature type="binding site" evidence="1">
    <location>
        <begin position="149"/>
        <end position="151"/>
    </location>
    <ligand>
        <name>CTP</name>
        <dbReference type="ChEBI" id="CHEBI:37563"/>
        <note>allosteric inhibitor</note>
    </ligand>
</feature>
<feature type="binding site" evidence="1">
    <location>
        <begin position="189"/>
        <end position="194"/>
    </location>
    <ligand>
        <name>CTP</name>
        <dbReference type="ChEBI" id="CHEBI:37563"/>
        <note>allosteric inhibitor</note>
    </ligand>
</feature>
<feature type="binding site" evidence="1">
    <location>
        <begin position="189"/>
        <end position="194"/>
    </location>
    <ligand>
        <name>UTP</name>
        <dbReference type="ChEBI" id="CHEBI:46398"/>
    </ligand>
</feature>
<feature type="binding site" evidence="1">
    <location>
        <position position="225"/>
    </location>
    <ligand>
        <name>CTP</name>
        <dbReference type="ChEBI" id="CHEBI:37563"/>
        <note>allosteric inhibitor</note>
    </ligand>
</feature>
<feature type="binding site" evidence="1">
    <location>
        <position position="225"/>
    </location>
    <ligand>
        <name>UTP</name>
        <dbReference type="ChEBI" id="CHEBI:46398"/>
    </ligand>
</feature>
<feature type="binding site" evidence="1">
    <location>
        <position position="355"/>
    </location>
    <ligand>
        <name>L-glutamine</name>
        <dbReference type="ChEBI" id="CHEBI:58359"/>
    </ligand>
</feature>
<feature type="binding site" evidence="1">
    <location>
        <begin position="383"/>
        <end position="386"/>
    </location>
    <ligand>
        <name>L-glutamine</name>
        <dbReference type="ChEBI" id="CHEBI:58359"/>
    </ligand>
</feature>
<feature type="binding site" evidence="1">
    <location>
        <position position="406"/>
    </location>
    <ligand>
        <name>L-glutamine</name>
        <dbReference type="ChEBI" id="CHEBI:58359"/>
    </ligand>
</feature>
<feature type="binding site" evidence="1">
    <location>
        <position position="463"/>
    </location>
    <ligand>
        <name>L-glutamine</name>
        <dbReference type="ChEBI" id="CHEBI:58359"/>
    </ligand>
</feature>
<protein>
    <recommendedName>
        <fullName evidence="1">CTP synthase</fullName>
        <ecNumber evidence="1">6.3.4.2</ecNumber>
    </recommendedName>
    <alternativeName>
        <fullName evidence="1">Cytidine 5'-triphosphate synthase</fullName>
    </alternativeName>
    <alternativeName>
        <fullName evidence="1">Cytidine triphosphate synthetase</fullName>
        <shortName evidence="1">CTP synthetase</shortName>
        <shortName evidence="1">CTPS</shortName>
    </alternativeName>
    <alternativeName>
        <fullName evidence="1">UTP--ammonia ligase</fullName>
    </alternativeName>
</protein>
<evidence type="ECO:0000255" key="1">
    <source>
        <dbReference type="HAMAP-Rule" id="MF_01227"/>
    </source>
</evidence>